<comment type="function">
    <text evidence="1">Involved in the mitochondrial division probably by regulating membrane fission. Loss-of-function leads to apoptosis (By similarity).</text>
</comment>
<comment type="subcellular location">
    <subcellularLocation>
        <location evidence="4">Mitochondrion inner membrane</location>
        <topology evidence="4">Multi-pass membrane protein</topology>
    </subcellularLocation>
</comment>
<comment type="similarity">
    <text evidence="4">Belongs to the MTFP1 family.</text>
</comment>
<name>MTFP1_CAEEL</name>
<dbReference type="EMBL" id="FO080546">
    <property type="protein sequence ID" value="CCD64559.1"/>
    <property type="molecule type" value="Genomic_DNA"/>
</dbReference>
<dbReference type="RefSeq" id="NP_001123181.1">
    <property type="nucleotide sequence ID" value="NM_001129709.3"/>
</dbReference>
<dbReference type="FunCoup" id="Q8T3C8">
    <property type="interactions" value="396"/>
</dbReference>
<dbReference type="STRING" id="6239.T13C5.8.2"/>
<dbReference type="PaxDb" id="6239-T13C5.8.1"/>
<dbReference type="PeptideAtlas" id="Q8T3C8"/>
<dbReference type="EnsemblMetazoa" id="T13C5.8.1">
    <property type="protein sequence ID" value="T13C5.8.1"/>
    <property type="gene ID" value="WBGene00077690"/>
</dbReference>
<dbReference type="GeneID" id="6418865"/>
<dbReference type="KEGG" id="cel:CELE_T13C5.8"/>
<dbReference type="UCSC" id="T13C5.8.1">
    <property type="organism name" value="c. elegans"/>
</dbReference>
<dbReference type="AGR" id="WB:WBGene00077690"/>
<dbReference type="CTD" id="6418865"/>
<dbReference type="WormBase" id="T13C5.8">
    <property type="protein sequence ID" value="CE42549"/>
    <property type="gene ID" value="WBGene00077690"/>
    <property type="gene designation" value="mtp-18"/>
</dbReference>
<dbReference type="eggNOG" id="KOG3945">
    <property type="taxonomic scope" value="Eukaryota"/>
</dbReference>
<dbReference type="GeneTree" id="ENSGT00390000004019"/>
<dbReference type="HOGENOM" id="CLU_053720_1_0_1"/>
<dbReference type="InParanoid" id="Q8T3C8"/>
<dbReference type="OMA" id="DVFTWQM"/>
<dbReference type="OrthoDB" id="424969at2759"/>
<dbReference type="PhylomeDB" id="Q8T3C8"/>
<dbReference type="PRO" id="PR:Q8T3C8"/>
<dbReference type="Proteomes" id="UP000001940">
    <property type="component" value="Chromosome X"/>
</dbReference>
<dbReference type="Bgee" id="WBGene00077690">
    <property type="expression patterns" value="Expressed in germ line (C elegans) and 4 other cell types or tissues"/>
</dbReference>
<dbReference type="GO" id="GO:0005743">
    <property type="term" value="C:mitochondrial inner membrane"/>
    <property type="evidence" value="ECO:0007669"/>
    <property type="project" value="UniProtKB-SubCell"/>
</dbReference>
<dbReference type="GO" id="GO:0005739">
    <property type="term" value="C:mitochondrion"/>
    <property type="evidence" value="ECO:0000318"/>
    <property type="project" value="GO_Central"/>
</dbReference>
<dbReference type="GO" id="GO:0006915">
    <property type="term" value="P:apoptotic process"/>
    <property type="evidence" value="ECO:0007669"/>
    <property type="project" value="UniProtKB-KW"/>
</dbReference>
<dbReference type="GO" id="GO:0000266">
    <property type="term" value="P:mitochondrial fission"/>
    <property type="evidence" value="ECO:0000318"/>
    <property type="project" value="GO_Central"/>
</dbReference>
<dbReference type="InterPro" id="IPR019560">
    <property type="entry name" value="Mitochondrial_18_kDa_protein"/>
</dbReference>
<dbReference type="PANTHER" id="PTHR11001">
    <property type="entry name" value="MITOCHONDRIAL FISSION PROCESS PROTEIN 1"/>
    <property type="match status" value="1"/>
</dbReference>
<dbReference type="PANTHER" id="PTHR11001:SF2">
    <property type="entry name" value="MITOCHONDRIAL FISSION PROCESS PROTEIN 1"/>
    <property type="match status" value="1"/>
</dbReference>
<dbReference type="Pfam" id="PF10558">
    <property type="entry name" value="MTP18"/>
    <property type="match status" value="1"/>
</dbReference>
<keyword id="KW-0053">Apoptosis</keyword>
<keyword id="KW-0472">Membrane</keyword>
<keyword id="KW-0496">Mitochondrion</keyword>
<keyword id="KW-0999">Mitochondrion inner membrane</keyword>
<keyword id="KW-1185">Reference proteome</keyword>
<keyword id="KW-0812">Transmembrane</keyword>
<keyword id="KW-1133">Transmembrane helix</keyword>
<proteinExistence type="inferred from homology"/>
<evidence type="ECO:0000250" key="1"/>
<evidence type="ECO:0000250" key="2">
    <source>
        <dbReference type="UniProtKB" id="Q9UDX5"/>
    </source>
</evidence>
<evidence type="ECO:0000255" key="3"/>
<evidence type="ECO:0000305" key="4"/>
<gene>
    <name type="primary">mtp-18</name>
    <name type="ORF">T13C5.8</name>
</gene>
<accession>Q8T3C8</accession>
<reference key="1">
    <citation type="journal article" date="1998" name="Science">
        <title>Genome sequence of the nematode C. elegans: a platform for investigating biology.</title>
        <authorList>
            <consortium name="The C. elegans sequencing consortium"/>
        </authorList>
    </citation>
    <scope>NUCLEOTIDE SEQUENCE [LARGE SCALE GENOMIC DNA]</scope>
    <source>
        <strain>Bristol N2</strain>
    </source>
</reference>
<sequence length="166" mass="18778">MTPVEEIIKKDIFRETPLRYLGYANEVGEAFRSLVKPVVVKFSYVVAFGYVAADSIDKGLQEYIKTHSTSTEKTKKVAIAAVDTVLWQTFASVLIPGFTINRFCFFSNLLLQKSTKLPTNMRKWTVTCLGLATIPFIVHPIDSFVEEAMDKTARKIYNEPTISNKE</sequence>
<protein>
    <recommendedName>
        <fullName>Mitochondrial fission process protein 1</fullName>
    </recommendedName>
    <alternativeName>
        <fullName>Mitochondrial 18 kDa protein</fullName>
        <shortName evidence="2">MTP18</shortName>
    </alternativeName>
</protein>
<organism>
    <name type="scientific">Caenorhabditis elegans</name>
    <dbReference type="NCBI Taxonomy" id="6239"/>
    <lineage>
        <taxon>Eukaryota</taxon>
        <taxon>Metazoa</taxon>
        <taxon>Ecdysozoa</taxon>
        <taxon>Nematoda</taxon>
        <taxon>Chromadorea</taxon>
        <taxon>Rhabditida</taxon>
        <taxon>Rhabditina</taxon>
        <taxon>Rhabditomorpha</taxon>
        <taxon>Rhabditoidea</taxon>
        <taxon>Rhabditidae</taxon>
        <taxon>Peloderinae</taxon>
        <taxon>Caenorhabditis</taxon>
    </lineage>
</organism>
<feature type="chain" id="PRO_0000374064" description="Mitochondrial fission process protein 1">
    <location>
        <begin position="1"/>
        <end position="166"/>
    </location>
</feature>
<feature type="transmembrane region" description="Helical" evidence="3">
    <location>
        <begin position="33"/>
        <end position="53"/>
    </location>
</feature>
<feature type="transmembrane region" description="Helical" evidence="3">
    <location>
        <begin position="78"/>
        <end position="98"/>
    </location>
</feature>
<feature type="transmembrane region" description="Helical" evidence="3">
    <location>
        <begin position="125"/>
        <end position="145"/>
    </location>
</feature>